<evidence type="ECO:0000250" key="1">
    <source>
        <dbReference type="UniProtKB" id="Q98829"/>
    </source>
</evidence>
<evidence type="ECO:0000256" key="2">
    <source>
        <dbReference type="SAM" id="MobiDB-lite"/>
    </source>
</evidence>
<evidence type="ECO:0000305" key="3"/>
<accession>P33422</accession>
<organism>
    <name type="scientific">Bluetongue virus 2 (isolate USA)</name>
    <name type="common">BTV 2</name>
    <dbReference type="NCBI Taxonomy" id="10907"/>
    <lineage>
        <taxon>Viruses</taxon>
        <taxon>Riboviria</taxon>
        <taxon>Orthornavirae</taxon>
        <taxon>Duplornaviricota</taxon>
        <taxon>Resentoviricetes</taxon>
        <taxon>Reovirales</taxon>
        <taxon>Sedoreoviridae</taxon>
        <taxon>Orbivirus</taxon>
        <taxon>Bluetongue virus</taxon>
    </lineage>
</organism>
<reference key="1">
    <citation type="journal article" date="1992" name="Virus Res.">
        <title>Comparative sequence analyses of the cognate structural protein VP6 genes of five US bluetongue viruses.</title>
        <authorList>
            <person name="Hwang G.-Y."/>
            <person name="Chiou J.-F."/>
            <person name="Yang Y.-Y."/>
            <person name="Li J.K.-K."/>
        </authorList>
    </citation>
    <scope>NUCLEOTIDE SEQUENCE [GENOMIC RNA]</scope>
</reference>
<organismHost>
    <name type="scientific">Antilocapra americana</name>
    <name type="common">Pronghorn</name>
    <dbReference type="NCBI Taxonomy" id="9891"/>
</organismHost>
<organismHost>
    <name type="scientific">Bos taurus</name>
    <name type="common">Bovine</name>
    <dbReference type="NCBI Taxonomy" id="9913"/>
</organismHost>
<organismHost>
    <name type="scientific">Capra hircus</name>
    <name type="common">Goat</name>
    <dbReference type="NCBI Taxonomy" id="9925"/>
</organismHost>
<organismHost>
    <name type="scientific">Culicoides variipennis</name>
    <name type="common">Biting midge</name>
    <dbReference type="NCBI Taxonomy" id="46212"/>
</organismHost>
<organismHost>
    <name type="scientific">Ovis aries</name>
    <name type="common">Sheep</name>
    <dbReference type="NCBI Taxonomy" id="9940"/>
</organismHost>
<keyword id="KW-0067">ATP-binding</keyword>
<keyword id="KW-0167">Capsid protein</keyword>
<keyword id="KW-0378">Hydrolase</keyword>
<keyword id="KW-1153">Inner capsid protein</keyword>
<keyword id="KW-0547">Nucleotide-binding</keyword>
<keyword id="KW-0946">Virion</keyword>
<feature type="chain" id="PRO_0000222721" description="Helicase VP6-A">
    <location>
        <begin position="1"/>
        <end position="301"/>
    </location>
</feature>
<feature type="region of interest" description="Disordered" evidence="2">
    <location>
        <begin position="1"/>
        <end position="99"/>
    </location>
</feature>
<feature type="region of interest" description="Disordered" evidence="2">
    <location>
        <begin position="163"/>
        <end position="208"/>
    </location>
</feature>
<feature type="compositionally biased region" description="Basic and acidic residues" evidence="2">
    <location>
        <begin position="8"/>
        <end position="30"/>
    </location>
</feature>
<feature type="compositionally biased region" description="Basic and acidic residues" evidence="2">
    <location>
        <begin position="37"/>
        <end position="55"/>
    </location>
</feature>
<feature type="compositionally biased region" description="Basic and acidic residues" evidence="2">
    <location>
        <begin position="67"/>
        <end position="81"/>
    </location>
</feature>
<feature type="compositionally biased region" description="Basic and acidic residues" evidence="2">
    <location>
        <begin position="163"/>
        <end position="177"/>
    </location>
</feature>
<feature type="compositionally biased region" description="Basic and acidic residues" evidence="2">
    <location>
        <begin position="186"/>
        <end position="202"/>
    </location>
</feature>
<feature type="binding site" evidence="1">
    <location>
        <position position="82"/>
    </location>
    <ligand>
        <name>ATP</name>
        <dbReference type="ChEBI" id="CHEBI:30616"/>
    </ligand>
</feature>
<proteinExistence type="inferred from homology"/>
<protein>
    <recommendedName>
        <fullName>Helicase VP6-A</fullName>
        <ecNumber evidence="1">3.6.4.13</ecNumber>
    </recommendedName>
    <alternativeName>
        <fullName>Minor inner core protein VP6</fullName>
    </alternativeName>
</protein>
<dbReference type="EC" id="3.6.4.13" evidence="1"/>
<dbReference type="EMBL" id="L08668">
    <property type="protein sequence ID" value="AAA42822.1"/>
    <property type="molecule type" value="Genomic_RNA"/>
</dbReference>
<dbReference type="SMR" id="P33422"/>
<dbReference type="GO" id="GO:0039625">
    <property type="term" value="C:viral inner capsid"/>
    <property type="evidence" value="ECO:0007669"/>
    <property type="project" value="UniProtKB-KW"/>
</dbReference>
<dbReference type="GO" id="GO:0005524">
    <property type="term" value="F:ATP binding"/>
    <property type="evidence" value="ECO:0007669"/>
    <property type="project" value="UniProtKB-KW"/>
</dbReference>
<dbReference type="GO" id="GO:0016787">
    <property type="term" value="F:hydrolase activity"/>
    <property type="evidence" value="ECO:0007669"/>
    <property type="project" value="UniProtKB-KW"/>
</dbReference>
<dbReference type="GO" id="GO:0005198">
    <property type="term" value="F:structural molecule activity"/>
    <property type="evidence" value="ECO:0007669"/>
    <property type="project" value="InterPro"/>
</dbReference>
<dbReference type="InterPro" id="IPR001399">
    <property type="entry name" value="Orbi_VP6"/>
</dbReference>
<dbReference type="Pfam" id="PF01516">
    <property type="entry name" value="Orbi_VP6"/>
    <property type="match status" value="1"/>
</dbReference>
<dbReference type="PRINTS" id="PR00902">
    <property type="entry name" value="VP6CAPSID"/>
</dbReference>
<sequence>MIDWAESESGKGDKVEPKEENEAEESKDGEGTQSESGQKKESSKEAEDADVDRRVHTTVGSGSGAKGFRERANENVDRGDGKVCGGVGDVDAGVGTTGTNGGRWVVLTEEIARAIESKYGTKIDVYRDEVPAQIIEVERSLQKELGISREGVAEQTERLRDLRRKEKSETHARVAEKGRRKQGKRVHGDAQKESTEDEKTPEEPTSVGITIEGVMSQKKLLSMIGGVERKMAPIGARESAVMLVSNSIKDVVRATAYFTAPTGDPHWKEVAREASKKKNILAYTSTGGDVKTEFLHLIDHL</sequence>
<name>VP6_BTV2A</name>
<comment type="function">
    <text evidence="1">ATP dependent RNA helicase essential for RNA packaging and viral transcription. Possesses ss- and dsRNA-binding capacity.</text>
</comment>
<comment type="catalytic activity">
    <reaction evidence="1">
        <text>ATP + H2O = ADP + phosphate + H(+)</text>
        <dbReference type="Rhea" id="RHEA:13065"/>
        <dbReference type="ChEBI" id="CHEBI:15377"/>
        <dbReference type="ChEBI" id="CHEBI:15378"/>
        <dbReference type="ChEBI" id="CHEBI:30616"/>
        <dbReference type="ChEBI" id="CHEBI:43474"/>
        <dbReference type="ChEBI" id="CHEBI:456216"/>
        <dbReference type="EC" id="3.6.4.13"/>
    </reaction>
</comment>
<comment type="subunit">
    <text evidence="1">Homohexamer.</text>
</comment>
<comment type="subcellular location">
    <subcellularLocation>
        <location>Virion</location>
    </subcellularLocation>
    <text>Inner capsid.</text>
</comment>
<comment type="similarity">
    <text evidence="3">Belongs to the orbivirus VP6 family.</text>
</comment>
<gene>
    <name type="primary">Segment-9</name>
</gene>